<accession>Q1CUH1</accession>
<comment type="function">
    <text evidence="1">Involved in the biosynthesis of branched-chain amino acids (BCAA). Catalyzes an alkyl-migration followed by a ketol-acid reduction of (S)-2-acetolactate (S2AL) to yield (R)-2,3-dihydroxy-isovalerate. In the isomerase reaction, S2AL is rearranged via a Mg-dependent methyl migration to produce 3-hydroxy-3-methyl-2-ketobutyrate (HMKB). In the reductase reaction, this 2-ketoacid undergoes a metal-dependent reduction by NADPH to yield (R)-2,3-dihydroxy-isovalerate.</text>
</comment>
<comment type="catalytic activity">
    <reaction evidence="1">
        <text>(2R)-2,3-dihydroxy-3-methylbutanoate + NADP(+) = (2S)-2-acetolactate + NADPH + H(+)</text>
        <dbReference type="Rhea" id="RHEA:22068"/>
        <dbReference type="ChEBI" id="CHEBI:15378"/>
        <dbReference type="ChEBI" id="CHEBI:49072"/>
        <dbReference type="ChEBI" id="CHEBI:57783"/>
        <dbReference type="ChEBI" id="CHEBI:58349"/>
        <dbReference type="ChEBI" id="CHEBI:58476"/>
        <dbReference type="EC" id="1.1.1.86"/>
    </reaction>
</comment>
<comment type="catalytic activity">
    <reaction evidence="1">
        <text>(2R,3R)-2,3-dihydroxy-3-methylpentanoate + NADP(+) = (S)-2-ethyl-2-hydroxy-3-oxobutanoate + NADPH + H(+)</text>
        <dbReference type="Rhea" id="RHEA:13493"/>
        <dbReference type="ChEBI" id="CHEBI:15378"/>
        <dbReference type="ChEBI" id="CHEBI:49256"/>
        <dbReference type="ChEBI" id="CHEBI:49258"/>
        <dbReference type="ChEBI" id="CHEBI:57783"/>
        <dbReference type="ChEBI" id="CHEBI:58349"/>
        <dbReference type="EC" id="1.1.1.86"/>
    </reaction>
</comment>
<comment type="cofactor">
    <cofactor evidence="1">
        <name>Mg(2+)</name>
        <dbReference type="ChEBI" id="CHEBI:18420"/>
    </cofactor>
    <text evidence="1">Binds 2 magnesium ions per subunit.</text>
</comment>
<comment type="pathway">
    <text evidence="1">Amino-acid biosynthesis; L-isoleucine biosynthesis; L-isoleucine from 2-oxobutanoate: step 2/4.</text>
</comment>
<comment type="pathway">
    <text evidence="1">Amino-acid biosynthesis; L-valine biosynthesis; L-valine from pyruvate: step 2/4.</text>
</comment>
<comment type="similarity">
    <text evidence="1">Belongs to the ketol-acid reductoisomerase family.</text>
</comment>
<keyword id="KW-0028">Amino-acid biosynthesis</keyword>
<keyword id="KW-0100">Branched-chain amino acid biosynthesis</keyword>
<keyword id="KW-0460">Magnesium</keyword>
<keyword id="KW-0479">Metal-binding</keyword>
<keyword id="KW-0521">NADP</keyword>
<keyword id="KW-0560">Oxidoreductase</keyword>
<gene>
    <name evidence="1" type="primary">ilvC</name>
    <name type="ordered locus">HPAG1_0334</name>
</gene>
<organism>
    <name type="scientific">Helicobacter pylori (strain HPAG1)</name>
    <dbReference type="NCBI Taxonomy" id="357544"/>
    <lineage>
        <taxon>Bacteria</taxon>
        <taxon>Pseudomonadati</taxon>
        <taxon>Campylobacterota</taxon>
        <taxon>Epsilonproteobacteria</taxon>
        <taxon>Campylobacterales</taxon>
        <taxon>Helicobacteraceae</taxon>
        <taxon>Helicobacter</taxon>
    </lineage>
</organism>
<protein>
    <recommendedName>
        <fullName evidence="1">Ketol-acid reductoisomerase (NADP(+))</fullName>
        <shortName evidence="1">KARI</shortName>
        <ecNumber evidence="1">1.1.1.86</ecNumber>
    </recommendedName>
    <alternativeName>
        <fullName evidence="1">Acetohydroxy-acid isomeroreductase</fullName>
        <shortName evidence="1">AHIR</shortName>
    </alternativeName>
    <alternativeName>
        <fullName evidence="1">Alpha-keto-beta-hydroxylacyl reductoisomerase</fullName>
    </alternativeName>
    <alternativeName>
        <fullName evidence="1">Ketol-acid reductoisomerase type 1</fullName>
    </alternativeName>
    <alternativeName>
        <fullName evidence="1">Ketol-acid reductoisomerase type I</fullName>
    </alternativeName>
</protein>
<evidence type="ECO:0000255" key="1">
    <source>
        <dbReference type="HAMAP-Rule" id="MF_00435"/>
    </source>
</evidence>
<evidence type="ECO:0000255" key="2">
    <source>
        <dbReference type="PROSITE-ProRule" id="PRU01197"/>
    </source>
</evidence>
<evidence type="ECO:0000255" key="3">
    <source>
        <dbReference type="PROSITE-ProRule" id="PRU01198"/>
    </source>
</evidence>
<sequence length="330" mass="36482">MALPVYYDKDIDLGVIQSLQVGIIGYGAQGEAQALNLRDSKVKVRIGLYQGSLSVSKAKKEGFEVLGVKELVQQSDVIMALLPDELHKEVLEKEVIPFLKEGQIVGFAHGFSVHFNQVVLPKGVGAILVAPKGPGSALREEYLKNRGLYHLIAIEQESSKNNAKAVALSYAKAMGGGRMGVLKTSFKEECESDLFGEQAVLCGGLEAIVRMGFETLIKAGYPEELAYFECVHEVKLVADLLHYKGVEGLRKHISNTAEFGAIKAREPMGNLLEKRMQKILKKIQNGSFAKDFLLEKSLNYPRLNTERKALKETKIEQIGEILRAPFNHKK</sequence>
<proteinExistence type="inferred from homology"/>
<reference key="1">
    <citation type="journal article" date="2006" name="Proc. Natl. Acad. Sci. U.S.A.">
        <title>The complete genome sequence of a chronic atrophic gastritis Helicobacter pylori strain: evolution during disease progression.</title>
        <authorList>
            <person name="Oh J.D."/>
            <person name="Kling-Baeckhed H."/>
            <person name="Giannakis M."/>
            <person name="Xu J."/>
            <person name="Fulton R.S."/>
            <person name="Fulton L.A."/>
            <person name="Cordum H.S."/>
            <person name="Wang C."/>
            <person name="Elliott G."/>
            <person name="Edwards J."/>
            <person name="Mardis E.R."/>
            <person name="Engstrand L.G."/>
            <person name="Gordon J.I."/>
        </authorList>
    </citation>
    <scope>NUCLEOTIDE SEQUENCE [LARGE SCALE GENOMIC DNA]</scope>
    <source>
        <strain>HPAG1</strain>
    </source>
</reference>
<dbReference type="EC" id="1.1.1.86" evidence="1"/>
<dbReference type="EMBL" id="CP000241">
    <property type="protein sequence ID" value="ABF84401.1"/>
    <property type="molecule type" value="Genomic_DNA"/>
</dbReference>
<dbReference type="RefSeq" id="WP_001207766.1">
    <property type="nucleotide sequence ID" value="NC_008086.1"/>
</dbReference>
<dbReference type="SMR" id="Q1CUH1"/>
<dbReference type="KEGG" id="hpa:HPAG1_0334"/>
<dbReference type="HOGENOM" id="CLU_033821_0_1_7"/>
<dbReference type="UniPathway" id="UPA00047">
    <property type="reaction ID" value="UER00056"/>
</dbReference>
<dbReference type="UniPathway" id="UPA00049">
    <property type="reaction ID" value="UER00060"/>
</dbReference>
<dbReference type="GO" id="GO:0005829">
    <property type="term" value="C:cytosol"/>
    <property type="evidence" value="ECO:0007669"/>
    <property type="project" value="TreeGrafter"/>
</dbReference>
<dbReference type="GO" id="GO:0004455">
    <property type="term" value="F:ketol-acid reductoisomerase activity"/>
    <property type="evidence" value="ECO:0007669"/>
    <property type="project" value="UniProtKB-UniRule"/>
</dbReference>
<dbReference type="GO" id="GO:0000287">
    <property type="term" value="F:magnesium ion binding"/>
    <property type="evidence" value="ECO:0007669"/>
    <property type="project" value="UniProtKB-UniRule"/>
</dbReference>
<dbReference type="GO" id="GO:0050661">
    <property type="term" value="F:NADP binding"/>
    <property type="evidence" value="ECO:0007669"/>
    <property type="project" value="InterPro"/>
</dbReference>
<dbReference type="GO" id="GO:0009097">
    <property type="term" value="P:isoleucine biosynthetic process"/>
    <property type="evidence" value="ECO:0007669"/>
    <property type="project" value="UniProtKB-UniRule"/>
</dbReference>
<dbReference type="GO" id="GO:0009099">
    <property type="term" value="P:L-valine biosynthetic process"/>
    <property type="evidence" value="ECO:0007669"/>
    <property type="project" value="UniProtKB-UniRule"/>
</dbReference>
<dbReference type="Gene3D" id="6.10.240.10">
    <property type="match status" value="1"/>
</dbReference>
<dbReference type="Gene3D" id="3.40.50.720">
    <property type="entry name" value="NAD(P)-binding Rossmann-like Domain"/>
    <property type="match status" value="1"/>
</dbReference>
<dbReference type="HAMAP" id="MF_00435">
    <property type="entry name" value="IlvC"/>
    <property type="match status" value="1"/>
</dbReference>
<dbReference type="InterPro" id="IPR008927">
    <property type="entry name" value="6-PGluconate_DH-like_C_sf"/>
</dbReference>
<dbReference type="InterPro" id="IPR013023">
    <property type="entry name" value="KARI"/>
</dbReference>
<dbReference type="InterPro" id="IPR000506">
    <property type="entry name" value="KARI_C"/>
</dbReference>
<dbReference type="InterPro" id="IPR013116">
    <property type="entry name" value="KARI_N"/>
</dbReference>
<dbReference type="InterPro" id="IPR014359">
    <property type="entry name" value="KARI_prok"/>
</dbReference>
<dbReference type="InterPro" id="IPR036291">
    <property type="entry name" value="NAD(P)-bd_dom_sf"/>
</dbReference>
<dbReference type="NCBIfam" id="TIGR00465">
    <property type="entry name" value="ilvC"/>
    <property type="match status" value="1"/>
</dbReference>
<dbReference type="NCBIfam" id="NF004017">
    <property type="entry name" value="PRK05479.1"/>
    <property type="match status" value="1"/>
</dbReference>
<dbReference type="PANTHER" id="PTHR21371">
    <property type="entry name" value="KETOL-ACID REDUCTOISOMERASE, MITOCHONDRIAL"/>
    <property type="match status" value="1"/>
</dbReference>
<dbReference type="PANTHER" id="PTHR21371:SF1">
    <property type="entry name" value="KETOL-ACID REDUCTOISOMERASE, MITOCHONDRIAL"/>
    <property type="match status" value="1"/>
</dbReference>
<dbReference type="Pfam" id="PF01450">
    <property type="entry name" value="KARI_C"/>
    <property type="match status" value="1"/>
</dbReference>
<dbReference type="Pfam" id="PF07991">
    <property type="entry name" value="KARI_N"/>
    <property type="match status" value="1"/>
</dbReference>
<dbReference type="PIRSF" id="PIRSF000116">
    <property type="entry name" value="IlvC_gammaproteo"/>
    <property type="match status" value="1"/>
</dbReference>
<dbReference type="SUPFAM" id="SSF48179">
    <property type="entry name" value="6-phosphogluconate dehydrogenase C-terminal domain-like"/>
    <property type="match status" value="1"/>
</dbReference>
<dbReference type="SUPFAM" id="SSF51735">
    <property type="entry name" value="NAD(P)-binding Rossmann-fold domains"/>
    <property type="match status" value="1"/>
</dbReference>
<dbReference type="PROSITE" id="PS51851">
    <property type="entry name" value="KARI_C"/>
    <property type="match status" value="1"/>
</dbReference>
<dbReference type="PROSITE" id="PS51850">
    <property type="entry name" value="KARI_N"/>
    <property type="match status" value="1"/>
</dbReference>
<name>ILVC_HELPH</name>
<feature type="chain" id="PRO_0000252763" description="Ketol-acid reductoisomerase (NADP(+))">
    <location>
        <begin position="1"/>
        <end position="330"/>
    </location>
</feature>
<feature type="domain" description="KARI N-terminal Rossmann" evidence="2">
    <location>
        <begin position="3"/>
        <end position="184"/>
    </location>
</feature>
<feature type="domain" description="KARI C-terminal knotted" evidence="3">
    <location>
        <begin position="185"/>
        <end position="329"/>
    </location>
</feature>
<feature type="active site" evidence="1">
    <location>
        <position position="109"/>
    </location>
</feature>
<feature type="binding site" evidence="1">
    <location>
        <begin position="26"/>
        <end position="29"/>
    </location>
    <ligand>
        <name>NADP(+)</name>
        <dbReference type="ChEBI" id="CHEBI:58349"/>
    </ligand>
</feature>
<feature type="binding site" evidence="1">
    <location>
        <position position="52"/>
    </location>
    <ligand>
        <name>NADP(+)</name>
        <dbReference type="ChEBI" id="CHEBI:58349"/>
    </ligand>
</feature>
<feature type="binding site" evidence="1">
    <location>
        <position position="54"/>
    </location>
    <ligand>
        <name>NADP(+)</name>
        <dbReference type="ChEBI" id="CHEBI:58349"/>
    </ligand>
</feature>
<feature type="binding site" evidence="1">
    <location>
        <position position="135"/>
    </location>
    <ligand>
        <name>NADP(+)</name>
        <dbReference type="ChEBI" id="CHEBI:58349"/>
    </ligand>
</feature>
<feature type="binding site" evidence="1">
    <location>
        <position position="193"/>
    </location>
    <ligand>
        <name>Mg(2+)</name>
        <dbReference type="ChEBI" id="CHEBI:18420"/>
        <label>1</label>
    </ligand>
</feature>
<feature type="binding site" evidence="1">
    <location>
        <position position="193"/>
    </location>
    <ligand>
        <name>Mg(2+)</name>
        <dbReference type="ChEBI" id="CHEBI:18420"/>
        <label>2</label>
    </ligand>
</feature>
<feature type="binding site" evidence="1">
    <location>
        <position position="197"/>
    </location>
    <ligand>
        <name>Mg(2+)</name>
        <dbReference type="ChEBI" id="CHEBI:18420"/>
        <label>1</label>
    </ligand>
</feature>
<feature type="binding site" evidence="1">
    <location>
        <position position="229"/>
    </location>
    <ligand>
        <name>Mg(2+)</name>
        <dbReference type="ChEBI" id="CHEBI:18420"/>
        <label>2</label>
    </ligand>
</feature>
<feature type="binding site" evidence="1">
    <location>
        <position position="233"/>
    </location>
    <ligand>
        <name>Mg(2+)</name>
        <dbReference type="ChEBI" id="CHEBI:18420"/>
        <label>2</label>
    </ligand>
</feature>
<feature type="binding site" evidence="1">
    <location>
        <position position="254"/>
    </location>
    <ligand>
        <name>substrate</name>
    </ligand>
</feature>